<reference key="1">
    <citation type="journal article" date="2006" name="Genome Res.">
        <title>Skewed genomic variability in strains of the toxigenic bacterial pathogen, Clostridium perfringens.</title>
        <authorList>
            <person name="Myers G.S.A."/>
            <person name="Rasko D.A."/>
            <person name="Cheung J.K."/>
            <person name="Ravel J."/>
            <person name="Seshadri R."/>
            <person name="DeBoy R.T."/>
            <person name="Ren Q."/>
            <person name="Varga J."/>
            <person name="Awad M.M."/>
            <person name="Brinkac L.M."/>
            <person name="Daugherty S.C."/>
            <person name="Haft D.H."/>
            <person name="Dodson R.J."/>
            <person name="Madupu R."/>
            <person name="Nelson W.C."/>
            <person name="Rosovitz M.J."/>
            <person name="Sullivan S.A."/>
            <person name="Khouri H."/>
            <person name="Dimitrov G.I."/>
            <person name="Watkins K.L."/>
            <person name="Mulligan S."/>
            <person name="Benton J."/>
            <person name="Radune D."/>
            <person name="Fisher D.J."/>
            <person name="Atkins H.S."/>
            <person name="Hiscox T."/>
            <person name="Jost B.H."/>
            <person name="Billington S.J."/>
            <person name="Songer J.G."/>
            <person name="McClane B.A."/>
            <person name="Titball R.W."/>
            <person name="Rood J.I."/>
            <person name="Melville S.B."/>
            <person name="Paulsen I.T."/>
        </authorList>
    </citation>
    <scope>NUCLEOTIDE SEQUENCE [LARGE SCALE GENOMIC DNA]</scope>
    <source>
        <strain>SM101 / Type A</strain>
    </source>
</reference>
<proteinExistence type="inferred from homology"/>
<name>MURI_CLOPS</name>
<feature type="chain" id="PRO_1000047561" description="Glutamate racemase">
    <location>
        <begin position="1"/>
        <end position="260"/>
    </location>
</feature>
<feature type="active site" description="Proton donor/acceptor" evidence="1">
    <location>
        <position position="77"/>
    </location>
</feature>
<feature type="active site" description="Proton donor/acceptor" evidence="1">
    <location>
        <position position="188"/>
    </location>
</feature>
<feature type="binding site" evidence="1">
    <location>
        <begin position="14"/>
        <end position="15"/>
    </location>
    <ligand>
        <name>substrate</name>
    </ligand>
</feature>
<feature type="binding site" evidence="1">
    <location>
        <begin position="46"/>
        <end position="47"/>
    </location>
    <ligand>
        <name>substrate</name>
    </ligand>
</feature>
<feature type="binding site" evidence="1">
    <location>
        <begin position="78"/>
        <end position="79"/>
    </location>
    <ligand>
        <name>substrate</name>
    </ligand>
</feature>
<feature type="binding site" evidence="1">
    <location>
        <begin position="189"/>
        <end position="190"/>
    </location>
    <ligand>
        <name>substrate</name>
    </ligand>
</feature>
<accession>Q0SPY8</accession>
<protein>
    <recommendedName>
        <fullName evidence="1">Glutamate racemase</fullName>
        <ecNumber evidence="1">5.1.1.3</ecNumber>
    </recommendedName>
</protein>
<evidence type="ECO:0000255" key="1">
    <source>
        <dbReference type="HAMAP-Rule" id="MF_00258"/>
    </source>
</evidence>
<comment type="function">
    <text evidence="1">Provides the (R)-glutamate required for cell wall biosynthesis.</text>
</comment>
<comment type="catalytic activity">
    <reaction evidence="1">
        <text>L-glutamate = D-glutamate</text>
        <dbReference type="Rhea" id="RHEA:12813"/>
        <dbReference type="ChEBI" id="CHEBI:29985"/>
        <dbReference type="ChEBI" id="CHEBI:29986"/>
        <dbReference type="EC" id="5.1.1.3"/>
    </reaction>
</comment>
<comment type="pathway">
    <text evidence="1">Cell wall biogenesis; peptidoglycan biosynthesis.</text>
</comment>
<comment type="similarity">
    <text evidence="1">Belongs to the aspartate/glutamate racemases family.</text>
</comment>
<dbReference type="EC" id="5.1.1.3" evidence="1"/>
<dbReference type="EMBL" id="CP000312">
    <property type="protein sequence ID" value="ABG85863.1"/>
    <property type="molecule type" value="Genomic_DNA"/>
</dbReference>
<dbReference type="RefSeq" id="WP_003467910.1">
    <property type="nucleotide sequence ID" value="NC_008262.1"/>
</dbReference>
<dbReference type="SMR" id="Q0SPY8"/>
<dbReference type="KEGG" id="cpr:CPR_2572"/>
<dbReference type="UniPathway" id="UPA00219"/>
<dbReference type="Proteomes" id="UP000001824">
    <property type="component" value="Chromosome"/>
</dbReference>
<dbReference type="GO" id="GO:0008881">
    <property type="term" value="F:glutamate racemase activity"/>
    <property type="evidence" value="ECO:0007669"/>
    <property type="project" value="UniProtKB-UniRule"/>
</dbReference>
<dbReference type="GO" id="GO:0071555">
    <property type="term" value="P:cell wall organization"/>
    <property type="evidence" value="ECO:0007669"/>
    <property type="project" value="UniProtKB-KW"/>
</dbReference>
<dbReference type="GO" id="GO:0009252">
    <property type="term" value="P:peptidoglycan biosynthetic process"/>
    <property type="evidence" value="ECO:0007669"/>
    <property type="project" value="UniProtKB-UniRule"/>
</dbReference>
<dbReference type="GO" id="GO:0008360">
    <property type="term" value="P:regulation of cell shape"/>
    <property type="evidence" value="ECO:0007669"/>
    <property type="project" value="UniProtKB-KW"/>
</dbReference>
<dbReference type="FunFam" id="3.40.50.1860:FF:000001">
    <property type="entry name" value="Glutamate racemase"/>
    <property type="match status" value="1"/>
</dbReference>
<dbReference type="Gene3D" id="3.40.50.1860">
    <property type="match status" value="2"/>
</dbReference>
<dbReference type="HAMAP" id="MF_00258">
    <property type="entry name" value="Glu_racemase"/>
    <property type="match status" value="1"/>
</dbReference>
<dbReference type="InterPro" id="IPR015942">
    <property type="entry name" value="Asp/Glu/hydantoin_racemase"/>
</dbReference>
<dbReference type="InterPro" id="IPR001920">
    <property type="entry name" value="Asp/Glu_race"/>
</dbReference>
<dbReference type="InterPro" id="IPR018187">
    <property type="entry name" value="Asp/Glu_racemase_AS_1"/>
</dbReference>
<dbReference type="InterPro" id="IPR033134">
    <property type="entry name" value="Asp/Glu_racemase_AS_2"/>
</dbReference>
<dbReference type="InterPro" id="IPR004391">
    <property type="entry name" value="Glu_race"/>
</dbReference>
<dbReference type="NCBIfam" id="TIGR00067">
    <property type="entry name" value="glut_race"/>
    <property type="match status" value="1"/>
</dbReference>
<dbReference type="PANTHER" id="PTHR21198">
    <property type="entry name" value="GLUTAMATE RACEMASE"/>
    <property type="match status" value="1"/>
</dbReference>
<dbReference type="PANTHER" id="PTHR21198:SF3">
    <property type="entry name" value="GLUTAMATE RACEMASE"/>
    <property type="match status" value="1"/>
</dbReference>
<dbReference type="Pfam" id="PF01177">
    <property type="entry name" value="Asp_Glu_race"/>
    <property type="match status" value="1"/>
</dbReference>
<dbReference type="SUPFAM" id="SSF53681">
    <property type="entry name" value="Aspartate/glutamate racemase"/>
    <property type="match status" value="2"/>
</dbReference>
<dbReference type="PROSITE" id="PS00923">
    <property type="entry name" value="ASP_GLU_RACEMASE_1"/>
    <property type="match status" value="1"/>
</dbReference>
<dbReference type="PROSITE" id="PS00924">
    <property type="entry name" value="ASP_GLU_RACEMASE_2"/>
    <property type="match status" value="1"/>
</dbReference>
<sequence length="260" mass="29203">MQDDLKNAPIGFFDSGLGGLSVLRKALEMMPNENYIYYGDSKHAPYGEKTPQEIRSLSFNAIEFLIKKGAKAIVIACNTATSAAAHDLREYYKDIPIIGIEPALKPAIKLHETGSVIVMATKATLTQEKFKNLMDKYGEHREVIPLPCPGLVEFIEAGNLEGEEVKNFLREKLNPYMDREISSIVLGCTHYPFVKDVIQDIVGEKVDIIDGSSGTIRELKRRLEENNMQSELKKKGDLDIFNSLEDNKILELSKKLIEIK</sequence>
<keyword id="KW-0133">Cell shape</keyword>
<keyword id="KW-0961">Cell wall biogenesis/degradation</keyword>
<keyword id="KW-0413">Isomerase</keyword>
<keyword id="KW-0573">Peptidoglycan synthesis</keyword>
<gene>
    <name evidence="1" type="primary">murI</name>
    <name type="ordered locus">CPR_2572</name>
</gene>
<organism>
    <name type="scientific">Clostridium perfringens (strain SM101 / Type A)</name>
    <dbReference type="NCBI Taxonomy" id="289380"/>
    <lineage>
        <taxon>Bacteria</taxon>
        <taxon>Bacillati</taxon>
        <taxon>Bacillota</taxon>
        <taxon>Clostridia</taxon>
        <taxon>Eubacteriales</taxon>
        <taxon>Clostridiaceae</taxon>
        <taxon>Clostridium</taxon>
    </lineage>
</organism>